<reference key="1">
    <citation type="journal article" date="1989" name="J. Bacteriol.">
        <title>The predicted protein product of a pathogenicity locus from Pseudomonas syringae pv. phaseolicola is homologous to a highly conserved domain of several procaryotic regulatory proteins.</title>
        <authorList>
            <person name="Grimm C."/>
            <person name="Panopoulos N.J."/>
        </authorList>
    </citation>
    <scope>NUCLEOTIDE SEQUENCE [GENOMIC DNA]</scope>
</reference>
<evidence type="ECO:0000255" key="1"/>
<evidence type="ECO:0000255" key="2">
    <source>
        <dbReference type="PROSITE-ProRule" id="PRU00193"/>
    </source>
</evidence>
<proteinExistence type="predicted"/>
<dbReference type="EMBL" id="M28524">
    <property type="protein sequence ID" value="AAA25838.1"/>
    <property type="molecule type" value="Genomic_DNA"/>
</dbReference>
<dbReference type="PIR" id="A33964">
    <property type="entry name" value="A33964"/>
</dbReference>
<dbReference type="SMR" id="P26316"/>
<dbReference type="GO" id="GO:0005524">
    <property type="term" value="F:ATP binding"/>
    <property type="evidence" value="ECO:0007669"/>
    <property type="project" value="UniProtKB-KW"/>
</dbReference>
<dbReference type="GO" id="GO:0016887">
    <property type="term" value="F:ATP hydrolysis activity"/>
    <property type="evidence" value="ECO:0007669"/>
    <property type="project" value="InterPro"/>
</dbReference>
<dbReference type="GO" id="GO:0043565">
    <property type="term" value="F:sequence-specific DNA binding"/>
    <property type="evidence" value="ECO:0007669"/>
    <property type="project" value="InterPro"/>
</dbReference>
<dbReference type="GO" id="GO:0000160">
    <property type="term" value="P:phosphorelay signal transduction system"/>
    <property type="evidence" value="ECO:0007669"/>
    <property type="project" value="UniProtKB-KW"/>
</dbReference>
<dbReference type="GO" id="GO:0006355">
    <property type="term" value="P:regulation of DNA-templated transcription"/>
    <property type="evidence" value="ECO:0007669"/>
    <property type="project" value="InterPro"/>
</dbReference>
<dbReference type="GO" id="GO:0052040">
    <property type="term" value="P:symbiont-mediated perturbation of host programmed cell death"/>
    <property type="evidence" value="ECO:0007669"/>
    <property type="project" value="UniProtKB-KW"/>
</dbReference>
<dbReference type="CDD" id="cd00009">
    <property type="entry name" value="AAA"/>
    <property type="match status" value="1"/>
</dbReference>
<dbReference type="FunFam" id="3.40.50.300:FF:000006">
    <property type="entry name" value="DNA-binding transcriptional regulator NtrC"/>
    <property type="match status" value="1"/>
</dbReference>
<dbReference type="Gene3D" id="1.10.8.60">
    <property type="match status" value="1"/>
</dbReference>
<dbReference type="Gene3D" id="1.10.10.60">
    <property type="entry name" value="Homeodomain-like"/>
    <property type="match status" value="1"/>
</dbReference>
<dbReference type="Gene3D" id="3.40.50.300">
    <property type="entry name" value="P-loop containing nucleotide triphosphate hydrolases"/>
    <property type="match status" value="1"/>
</dbReference>
<dbReference type="InterPro" id="IPR003593">
    <property type="entry name" value="AAA+_ATPase"/>
</dbReference>
<dbReference type="InterPro" id="IPR009057">
    <property type="entry name" value="Homeodomain-like_sf"/>
</dbReference>
<dbReference type="InterPro" id="IPR002197">
    <property type="entry name" value="HTH_Fis"/>
</dbReference>
<dbReference type="InterPro" id="IPR027417">
    <property type="entry name" value="P-loop_NTPase"/>
</dbReference>
<dbReference type="InterPro" id="IPR002078">
    <property type="entry name" value="Sigma_54_int"/>
</dbReference>
<dbReference type="InterPro" id="IPR025662">
    <property type="entry name" value="Sigma_54_int_dom_ATP-bd_1"/>
</dbReference>
<dbReference type="InterPro" id="IPR025943">
    <property type="entry name" value="Sigma_54_int_dom_ATP-bd_2"/>
</dbReference>
<dbReference type="InterPro" id="IPR025944">
    <property type="entry name" value="Sigma_54_int_dom_CS"/>
</dbReference>
<dbReference type="PANTHER" id="PTHR32071:SF57">
    <property type="entry name" value="C4-DICARBOXYLATE TRANSPORT TRANSCRIPTIONAL REGULATORY PROTEIN DCTD"/>
    <property type="match status" value="1"/>
</dbReference>
<dbReference type="PANTHER" id="PTHR32071">
    <property type="entry name" value="TRANSCRIPTIONAL REGULATORY PROTEIN"/>
    <property type="match status" value="1"/>
</dbReference>
<dbReference type="Pfam" id="PF02954">
    <property type="entry name" value="HTH_8"/>
    <property type="match status" value="1"/>
</dbReference>
<dbReference type="Pfam" id="PF00158">
    <property type="entry name" value="Sigma54_activat"/>
    <property type="match status" value="1"/>
</dbReference>
<dbReference type="SMART" id="SM00382">
    <property type="entry name" value="AAA"/>
    <property type="match status" value="1"/>
</dbReference>
<dbReference type="SUPFAM" id="SSF46689">
    <property type="entry name" value="Homeodomain-like"/>
    <property type="match status" value="1"/>
</dbReference>
<dbReference type="SUPFAM" id="SSF52540">
    <property type="entry name" value="P-loop containing nucleoside triphosphate hydrolases"/>
    <property type="match status" value="1"/>
</dbReference>
<dbReference type="PROSITE" id="PS00675">
    <property type="entry name" value="SIGMA54_INTERACT_1"/>
    <property type="match status" value="1"/>
</dbReference>
<dbReference type="PROSITE" id="PS00676">
    <property type="entry name" value="SIGMA54_INTERACT_2"/>
    <property type="match status" value="1"/>
</dbReference>
<dbReference type="PROSITE" id="PS00688">
    <property type="entry name" value="SIGMA54_INTERACT_3"/>
    <property type="match status" value="1"/>
</dbReference>
<dbReference type="PROSITE" id="PS50045">
    <property type="entry name" value="SIGMA54_INTERACT_4"/>
    <property type="match status" value="1"/>
</dbReference>
<keyword id="KW-0010">Activator</keyword>
<keyword id="KW-0067">ATP-binding</keyword>
<keyword id="KW-0238">DNA-binding</keyword>
<keyword id="KW-0928">Hypersensitive response elicitation</keyword>
<keyword id="KW-0547">Nucleotide-binding</keyword>
<keyword id="KW-0804">Transcription</keyword>
<keyword id="KW-0805">Transcription regulation</keyword>
<keyword id="KW-0902">Two-component regulatory system</keyword>
<sequence>MHLDEGFDDDLDEERVPNLGIVAESISQLGIDVLLSGETGTGKDTIAQRIHTISGRKGRLVAMNCAAIPESLAESELFGVVSPAYTGADRSRVGYIEAAQGGTLYLDEIDSMPLSLQAKLLRVLETRALERLGSTSTIKLDVCVIASAQSSLDDAVEQGKFRRDLYFRLNVLTLQLPPLRTQPERILPLFKRFMAAAAKELNVASADVCPLLQQVLLGHEWPGNIRELKAAAKRHVLGFPVLGVDPQSEEHLACGLKSQLRAIEKALIQQSLKRHRNCIDAASLELDMPRRTLYRRIKELQI</sequence>
<gene>
    <name type="primary">hrpS</name>
</gene>
<accession>P26316</accession>
<comment type="function">
    <text>Member of the two-component regulatory system HrpR/HrpS that regulates the activation of the sigma factor hrpL which itself induces the expression of hprD as well as other hrp loci which are involved in plant pathogenicity, hrmA and avr genes. Probably interacts with sigma-54.</text>
</comment>
<feature type="chain" id="PRO_0000081322" description="Pathogenicity locus probable regulatory protein HrpS">
    <location>
        <begin position="1"/>
        <end position="302"/>
    </location>
</feature>
<feature type="domain" description="Sigma-54 factor interaction" evidence="2">
    <location>
        <begin position="9"/>
        <end position="237"/>
    </location>
</feature>
<feature type="DNA-binding region" description="H-T-H motif" evidence="1">
    <location>
        <begin position="279"/>
        <end position="298"/>
    </location>
</feature>
<feature type="binding site" evidence="2">
    <location>
        <begin position="37"/>
        <end position="44"/>
    </location>
    <ligand>
        <name>ATP</name>
        <dbReference type="ChEBI" id="CHEBI:30616"/>
    </ligand>
</feature>
<feature type="binding site" evidence="2">
    <location>
        <begin position="99"/>
        <end position="108"/>
    </location>
    <ligand>
        <name>ATP</name>
        <dbReference type="ChEBI" id="CHEBI:30616"/>
    </ligand>
</feature>
<protein>
    <recommendedName>
        <fullName>Pathogenicity locus probable regulatory protein HrpS</fullName>
    </recommendedName>
</protein>
<organism>
    <name type="scientific">Pseudomonas savastanoi pv. phaseolicola</name>
    <name type="common">Pseudomonas syringae pv. phaseolicola</name>
    <dbReference type="NCBI Taxonomy" id="319"/>
    <lineage>
        <taxon>Bacteria</taxon>
        <taxon>Pseudomonadati</taxon>
        <taxon>Pseudomonadota</taxon>
        <taxon>Gammaproteobacteria</taxon>
        <taxon>Pseudomonadales</taxon>
        <taxon>Pseudomonadaceae</taxon>
        <taxon>Pseudomonas</taxon>
    </lineage>
</organism>
<name>HRPS_PSESH</name>